<name>ISPD_RAT</name>
<keyword id="KW-0025">Alternative splicing</keyword>
<keyword id="KW-0963">Cytoplasm</keyword>
<keyword id="KW-0548">Nucleotidyltransferase</keyword>
<keyword id="KW-1185">Reference proteome</keyword>
<keyword id="KW-0808">Transferase</keyword>
<evidence type="ECO:0000250" key="1">
    <source>
        <dbReference type="UniProtKB" id="A4D126"/>
    </source>
</evidence>
<evidence type="ECO:0000250" key="2">
    <source>
        <dbReference type="UniProtKB" id="Q46893"/>
    </source>
</evidence>
<evidence type="ECO:0000303" key="3">
    <source ref="1"/>
</evidence>
<evidence type="ECO:0000305" key="4"/>
<evidence type="ECO:0000312" key="5">
    <source>
        <dbReference type="RGD" id="1359368"/>
    </source>
</evidence>
<accession>Q5S6T3</accession>
<accession>Q5S6T4</accession>
<feature type="chain" id="PRO_0000343699" description="D-ribitol-5-phosphate cytidylyltransferase">
    <location>
        <begin position="1"/>
        <end position="447"/>
    </location>
</feature>
<feature type="site" description="Transition state stabilizer" evidence="2">
    <location>
        <position position="57"/>
    </location>
</feature>
<feature type="site" description="Transition state stabilizer" evidence="2">
    <location>
        <position position="64"/>
    </location>
</feature>
<feature type="site" description="Positions substrate for the nucleophilic attack" evidence="2">
    <location>
        <position position="203"/>
    </location>
</feature>
<feature type="site" description="Positions substrate for the nucleophilic attack" evidence="2">
    <location>
        <position position="261"/>
    </location>
</feature>
<feature type="splice variant" id="VSP_034674" description="In isoform 2." evidence="3">
    <location>
        <begin position="1"/>
        <end position="99"/>
    </location>
</feature>
<sequence length="447" mass="49192">MESGPCSRPAEPRHCVSGRAGAGLAFPAFPLSAAGAEPGSRIGTVAAVLPAGGCGERMGVRTPKQFCRVLERPLISYTLQAMERVCWIKDIVVTVTGENMEAMRSIIQRYGHKRISLAEAGATRHRSIFNGLKALAEDQPGCELTRPEVVIIHDAVRPFVEEDILLRVVLAAKEHGAAGAIRPLVSTVVSPSADGHLDHSLDRAKHRASEMPQAFHFDVIYEAYQKCSDFDLEFGTECLQLALKYCHRKAKLVEGTPDLWKVTYKQDLCAAEAMIKEKISQEICVVVNTKDEESVGHLLEEVLRNELNCIKVTSTVLDRTSGDIENFIDQCYSFICVNVVSSESRETRKLLSILEESSLPLLYPVVVVLVHCFDFTVVPLAQKMENLVWIRELAKEAKGRNVLLSGVLLNHSQDEQKLQESLVQSAAIIAALVKERNSALVGQLLVA</sequence>
<organism>
    <name type="scientific">Rattus norvegicus</name>
    <name type="common">Rat</name>
    <dbReference type="NCBI Taxonomy" id="10116"/>
    <lineage>
        <taxon>Eukaryota</taxon>
        <taxon>Metazoa</taxon>
        <taxon>Chordata</taxon>
        <taxon>Craniata</taxon>
        <taxon>Vertebrata</taxon>
        <taxon>Euteleostomi</taxon>
        <taxon>Mammalia</taxon>
        <taxon>Eutheria</taxon>
        <taxon>Euarchontoglires</taxon>
        <taxon>Glires</taxon>
        <taxon>Rodentia</taxon>
        <taxon>Myomorpha</taxon>
        <taxon>Muroidea</taxon>
        <taxon>Muridae</taxon>
        <taxon>Murinae</taxon>
        <taxon>Rattus</taxon>
    </lineage>
</organism>
<comment type="function">
    <text evidence="1">Cytidylyltransferase required for protein O-linked mannosylation (By similarity). Catalyzes the formation of CDP-ribitol nucleotide sugar from D-ribitol 5-phosphate. CDP-ribitol is a substrate of FKTN during the biosynthesis of the phosphorylated O-mannosyl trisaccharide (N-acetylgalactosamine-beta-3-N-acetylglucosamine-beta-4-(phosphate-6-)mannose), a carbohydrate structure present in alpha-dystroglycan (DAG1), which is required for binding laminin G-like domain-containing extracellular proteins with high affinity (By similarity). Shows activity toward other pentose phosphate sugars and mediates formation of CDP-ribulose or CDP-ribose using CTP and ribulose-5-phosphate or ribose-5-phosphate, respectively (By similarity). Not involved in dolichol production (By similarity).</text>
</comment>
<comment type="catalytic activity">
    <reaction evidence="1">
        <text>D-ribitol 5-phosphate + CTP + H(+) = CDP-L-ribitol + diphosphate</text>
        <dbReference type="Rhea" id="RHEA:12456"/>
        <dbReference type="ChEBI" id="CHEBI:15378"/>
        <dbReference type="ChEBI" id="CHEBI:33019"/>
        <dbReference type="ChEBI" id="CHEBI:37563"/>
        <dbReference type="ChEBI" id="CHEBI:57608"/>
        <dbReference type="ChEBI" id="CHEBI:57695"/>
        <dbReference type="EC" id="2.7.7.40"/>
    </reaction>
</comment>
<comment type="catalytic activity">
    <reaction evidence="1">
        <text>D-ribose 5-phosphate + CTP + H(+) = CDP-D-ribose + diphosphate</text>
        <dbReference type="Rhea" id="RHEA:53872"/>
        <dbReference type="ChEBI" id="CHEBI:15378"/>
        <dbReference type="ChEBI" id="CHEBI:33019"/>
        <dbReference type="ChEBI" id="CHEBI:37563"/>
        <dbReference type="ChEBI" id="CHEBI:78346"/>
        <dbReference type="ChEBI" id="CHEBI:137525"/>
    </reaction>
</comment>
<comment type="catalytic activity">
    <reaction evidence="1">
        <text>D-ribulose 5-phosphate + CTP + H(+) = CDP-D-ribulose + diphosphate</text>
        <dbReference type="Rhea" id="RHEA:53612"/>
        <dbReference type="ChEBI" id="CHEBI:15378"/>
        <dbReference type="ChEBI" id="CHEBI:33019"/>
        <dbReference type="ChEBI" id="CHEBI:37563"/>
        <dbReference type="ChEBI" id="CHEBI:58121"/>
        <dbReference type="ChEBI" id="CHEBI:137524"/>
    </reaction>
</comment>
<comment type="pathway">
    <text evidence="1">Protein modification; protein glycosylation.</text>
</comment>
<comment type="subunit">
    <text evidence="1">Homodimer.</text>
</comment>
<comment type="subcellular location">
    <subcellularLocation>
        <location evidence="1">Cytoplasm</location>
        <location evidence="1">Cytosol</location>
    </subcellularLocation>
</comment>
<comment type="alternative products">
    <event type="alternative splicing"/>
    <isoform>
        <id>Q5S6T3-1</id>
        <name>1</name>
        <sequence type="displayed"/>
    </isoform>
    <isoform>
        <id>Q5S6T3-2</id>
        <name>2</name>
        <sequence type="described" ref="VSP_034674"/>
    </isoform>
</comment>
<comment type="similarity">
    <text evidence="4">Belongs to the IspD/TarI cytidylyltransferase family. IspD subfamily.</text>
</comment>
<proteinExistence type="evidence at transcript level"/>
<reference key="1">
    <citation type="submission" date="2004-10" db="EMBL/GenBank/DDBJ databases">
        <authorList>
            <person name="Kwon S.H."/>
            <person name="Reichardt H.M."/>
        </authorList>
    </citation>
    <scope>NUCLEOTIDE SEQUENCE [MRNA] (ISOFORMS 1 AND 2)</scope>
    <source>
        <tissue>Kidney</tissue>
        <tissue>Thymus</tissue>
    </source>
</reference>
<protein>
    <recommendedName>
        <fullName evidence="1">D-ribitol-5-phosphate cytidylyltransferase</fullName>
        <ecNumber evidence="1">2.7.7.40</ecNumber>
    </recommendedName>
    <alternativeName>
        <fullName evidence="1">2-C-methyl-D-erythritol 4-phosphate cytidylyltransferase-like protein</fullName>
    </alternativeName>
    <alternativeName>
        <fullName evidence="5">Isoprenoid synthase domain-containing protein</fullName>
    </alternativeName>
    <alternativeName>
        <fullName evidence="3">Notch1-induced protein</fullName>
    </alternativeName>
</protein>
<dbReference type="EC" id="2.7.7.40" evidence="1"/>
<dbReference type="EMBL" id="AY769991">
    <property type="protein sequence ID" value="AAV53695.1"/>
    <property type="molecule type" value="mRNA"/>
</dbReference>
<dbReference type="EMBL" id="AY769992">
    <property type="protein sequence ID" value="AAV53696.1"/>
    <property type="molecule type" value="mRNA"/>
</dbReference>
<dbReference type="RefSeq" id="NP_001008387.1">
    <molecule id="Q5S6T3-1"/>
    <property type="nucleotide sequence ID" value="NM_001008386.1"/>
</dbReference>
<dbReference type="RefSeq" id="XP_038968598.1">
    <molecule id="Q5S6T3-2"/>
    <property type="nucleotide sequence ID" value="XM_039112670.1"/>
</dbReference>
<dbReference type="SMR" id="Q5S6T3"/>
<dbReference type="FunCoup" id="Q5S6T3">
    <property type="interactions" value="202"/>
</dbReference>
<dbReference type="STRING" id="10116.ENSRNOP00000008312"/>
<dbReference type="PhosphoSitePlus" id="Q5S6T3"/>
<dbReference type="PaxDb" id="10116-ENSRNOP00000008312"/>
<dbReference type="Ensembl" id="ENSRNOT00000008312.5">
    <molecule id="Q5S6T3-1"/>
    <property type="protein sequence ID" value="ENSRNOP00000008312.4"/>
    <property type="gene ID" value="ENSRNOG00000006199.7"/>
</dbReference>
<dbReference type="GeneID" id="493574"/>
<dbReference type="KEGG" id="rno:493574"/>
<dbReference type="UCSC" id="RGD:1359368">
    <molecule id="Q5S6T3-1"/>
    <property type="organism name" value="rat"/>
</dbReference>
<dbReference type="AGR" id="RGD:1359368"/>
<dbReference type="CTD" id="729920"/>
<dbReference type="RGD" id="1359368">
    <property type="gene designation" value="Crppa"/>
</dbReference>
<dbReference type="eggNOG" id="ENOG502QUUE">
    <property type="taxonomic scope" value="Eukaryota"/>
</dbReference>
<dbReference type="GeneTree" id="ENSGT00390000006412"/>
<dbReference type="InParanoid" id="Q5S6T3"/>
<dbReference type="OrthoDB" id="45917at9989"/>
<dbReference type="PhylomeDB" id="Q5S6T3"/>
<dbReference type="TreeFam" id="TF328415"/>
<dbReference type="UniPathway" id="UPA00378"/>
<dbReference type="PRO" id="PR:Q5S6T3"/>
<dbReference type="Proteomes" id="UP000002494">
    <property type="component" value="Chromosome 6"/>
</dbReference>
<dbReference type="Bgee" id="ENSRNOG00000006199">
    <property type="expression patterns" value="Expressed in heart and 19 other cell types or tissues"/>
</dbReference>
<dbReference type="ExpressionAtlas" id="Q5S6T3">
    <property type="expression patterns" value="baseline and differential"/>
</dbReference>
<dbReference type="GO" id="GO:0005829">
    <property type="term" value="C:cytosol"/>
    <property type="evidence" value="ECO:0000250"/>
    <property type="project" value="UniProtKB"/>
</dbReference>
<dbReference type="GO" id="GO:0070567">
    <property type="term" value="F:cytidylyltransferase activity"/>
    <property type="evidence" value="ECO:0000250"/>
    <property type="project" value="UniProtKB"/>
</dbReference>
<dbReference type="GO" id="GO:0047349">
    <property type="term" value="F:D-ribitol-5-phosphate cytidylyltransferase activity"/>
    <property type="evidence" value="ECO:0000250"/>
    <property type="project" value="UniProtKB"/>
</dbReference>
<dbReference type="GO" id="GO:0042803">
    <property type="term" value="F:protein homodimerization activity"/>
    <property type="evidence" value="ECO:0000250"/>
    <property type="project" value="UniProtKB"/>
</dbReference>
<dbReference type="GO" id="GO:0007411">
    <property type="term" value="P:axon guidance"/>
    <property type="evidence" value="ECO:0000266"/>
    <property type="project" value="RGD"/>
</dbReference>
<dbReference type="GO" id="GO:0008299">
    <property type="term" value="P:isoprenoid biosynthetic process"/>
    <property type="evidence" value="ECO:0007669"/>
    <property type="project" value="InterPro"/>
</dbReference>
<dbReference type="GO" id="GO:0006486">
    <property type="term" value="P:protein glycosylation"/>
    <property type="evidence" value="ECO:0000266"/>
    <property type="project" value="RGD"/>
</dbReference>
<dbReference type="GO" id="GO:0035269">
    <property type="term" value="P:protein O-linked mannosylation"/>
    <property type="evidence" value="ECO:0000250"/>
    <property type="project" value="UniProtKB"/>
</dbReference>
<dbReference type="CDD" id="cd02516">
    <property type="entry name" value="CDP-ME_synthetase"/>
    <property type="match status" value="1"/>
</dbReference>
<dbReference type="FunFam" id="3.90.550.10:FF:000080">
    <property type="entry name" value="D-ribitol-5-phosphate cytidylyltransferase isoform X1"/>
    <property type="match status" value="1"/>
</dbReference>
<dbReference type="Gene3D" id="3.90.550.10">
    <property type="entry name" value="Spore Coat Polysaccharide Biosynthesis Protein SpsA, Chain A"/>
    <property type="match status" value="1"/>
</dbReference>
<dbReference type="InterPro" id="IPR034683">
    <property type="entry name" value="IspD/TarI"/>
</dbReference>
<dbReference type="InterPro" id="IPR040635">
    <property type="entry name" value="ISPD_C"/>
</dbReference>
<dbReference type="InterPro" id="IPR018294">
    <property type="entry name" value="ISPD_synthase_CS"/>
</dbReference>
<dbReference type="InterPro" id="IPR029044">
    <property type="entry name" value="Nucleotide-diphossugar_trans"/>
</dbReference>
<dbReference type="PANTHER" id="PTHR43015">
    <property type="entry name" value="D-RIBITOL-5-PHOSPHATE CYTIDYLYLTRANSFERASE"/>
    <property type="match status" value="1"/>
</dbReference>
<dbReference type="PANTHER" id="PTHR43015:SF1">
    <property type="entry name" value="D-RIBITOL-5-PHOSPHATE CYTIDYLYLTRANSFERASE"/>
    <property type="match status" value="1"/>
</dbReference>
<dbReference type="Pfam" id="PF01128">
    <property type="entry name" value="IspD"/>
    <property type="match status" value="1"/>
</dbReference>
<dbReference type="Pfam" id="PF18706">
    <property type="entry name" value="ISPD_C"/>
    <property type="match status" value="1"/>
</dbReference>
<dbReference type="SUPFAM" id="SSF53448">
    <property type="entry name" value="Nucleotide-diphospho-sugar transferases"/>
    <property type="match status" value="1"/>
</dbReference>
<dbReference type="PROSITE" id="PS01295">
    <property type="entry name" value="ISPD"/>
    <property type="match status" value="1"/>
</dbReference>
<gene>
    <name type="primary">Crppa</name>
    <name evidence="5" type="synonym">Ispd</name>
    <name evidence="3" type="synonym">Nip</name>
</gene>